<name>ARGE_MORPR</name>
<protein>
    <recommendedName>
        <fullName evidence="1">Acetylornithine deacetylase</fullName>
        <shortName evidence="1">AO</shortName>
        <shortName evidence="1">Acetylornithinase</shortName>
        <ecNumber evidence="1">3.5.1.16</ecNumber>
    </recommendedName>
    <alternativeName>
        <fullName evidence="1">N-acetylornithinase</fullName>
        <shortName evidence="1">NAO</shortName>
    </alternativeName>
</protein>
<sequence length="381" mass="41868">MQLPKFNELYKSLILTPSISSLEKELDISNKPVIDLLAAWFSELGFSINITSVPETNGKFNLVATYGQGDGGLLLAGHTDTVPFDDGLWTKDPFQLTEKDDKWYGLGTIDMKGFFAFVLEACKNIDLTKLDKPLRILATADEETTMAGARAIAAAKSFRPDYAVIGEPTSMVPVFMHKGHMSEAIRITGRSGHSSDPANGINAIEIMHQVTGQLLQLQRKLKEQYACDHFVIPQPTLNFGHVHGGDSPNRICGSCELHIDMRPIPGVNPDELFMLLNQALLPIMKQWPGAVDVYHLHEPIPAYACDTDSALIKLAEKLTGETVIPVNYCTEAPFIHTGCDTIVMGPGSINQAHQPDEYLDLSAIKPTQAIIQKLIEQSCKN</sequence>
<evidence type="ECO:0000255" key="1">
    <source>
        <dbReference type="HAMAP-Rule" id="MF_01108"/>
    </source>
</evidence>
<evidence type="ECO:0000305" key="2"/>
<accession>Q9K4Z7</accession>
<keyword id="KW-0028">Amino-acid biosynthesis</keyword>
<keyword id="KW-0055">Arginine biosynthesis</keyword>
<keyword id="KW-0170">Cobalt</keyword>
<keyword id="KW-0963">Cytoplasm</keyword>
<keyword id="KW-0378">Hydrolase</keyword>
<keyword id="KW-0479">Metal-binding</keyword>
<keyword id="KW-0862">Zinc</keyword>
<comment type="function">
    <text evidence="1">Catalyzes the hydrolysis of the amide bond of N(2)-acetylated L-amino acids. Cleaves the acetyl group from N-acetyl-L-ornithine to form L-ornithine, an intermediate in L-arginine biosynthesis pathway, and a branchpoint in the synthesis of polyamines.</text>
</comment>
<comment type="catalytic activity">
    <reaction evidence="1">
        <text>N(2)-acetyl-L-ornithine + H2O = L-ornithine + acetate</text>
        <dbReference type="Rhea" id="RHEA:15941"/>
        <dbReference type="ChEBI" id="CHEBI:15377"/>
        <dbReference type="ChEBI" id="CHEBI:30089"/>
        <dbReference type="ChEBI" id="CHEBI:46911"/>
        <dbReference type="ChEBI" id="CHEBI:57805"/>
        <dbReference type="EC" id="3.5.1.16"/>
    </reaction>
</comment>
<comment type="cofactor">
    <cofactor evidence="1">
        <name>Zn(2+)</name>
        <dbReference type="ChEBI" id="CHEBI:29105"/>
    </cofactor>
    <cofactor evidence="1">
        <name>Co(2+)</name>
        <dbReference type="ChEBI" id="CHEBI:48828"/>
    </cofactor>
    <text evidence="1">Binds 2 Zn(2+) or Co(2+) ions per subunit.</text>
</comment>
<comment type="cofactor">
    <cofactor evidence="1">
        <name>glutathione</name>
        <dbReference type="ChEBI" id="CHEBI:57925"/>
    </cofactor>
</comment>
<comment type="pathway">
    <text evidence="1">Amino-acid biosynthesis; L-arginine biosynthesis; L-ornithine from N(2)-acetyl-L-ornithine (linear): step 1/1.</text>
</comment>
<comment type="subunit">
    <text evidence="1">Homodimer.</text>
</comment>
<comment type="subcellular location">
    <subcellularLocation>
        <location evidence="1 2">Cytoplasm</location>
    </subcellularLocation>
</comment>
<comment type="similarity">
    <text evidence="1 2">Belongs to the peptidase M20A family. ArgE subfamily.</text>
</comment>
<dbReference type="EC" id="3.5.1.16" evidence="1"/>
<dbReference type="EMBL" id="AJ252020">
    <property type="protein sequence ID" value="CAB95013.1"/>
    <property type="molecule type" value="Genomic_DNA"/>
</dbReference>
<dbReference type="SMR" id="Q9K4Z7"/>
<dbReference type="UniPathway" id="UPA00068">
    <property type="reaction ID" value="UER00110"/>
</dbReference>
<dbReference type="GO" id="GO:0005737">
    <property type="term" value="C:cytoplasm"/>
    <property type="evidence" value="ECO:0007669"/>
    <property type="project" value="UniProtKB-SubCell"/>
</dbReference>
<dbReference type="GO" id="GO:0008777">
    <property type="term" value="F:acetylornithine deacetylase activity"/>
    <property type="evidence" value="ECO:0007669"/>
    <property type="project" value="UniProtKB-EC"/>
</dbReference>
<dbReference type="GO" id="GO:0046872">
    <property type="term" value="F:metal ion binding"/>
    <property type="evidence" value="ECO:0007669"/>
    <property type="project" value="UniProtKB-KW"/>
</dbReference>
<dbReference type="GO" id="GO:0006526">
    <property type="term" value="P:L-arginine biosynthetic process"/>
    <property type="evidence" value="ECO:0007669"/>
    <property type="project" value="UniProtKB-UniPathway"/>
</dbReference>
<dbReference type="CDD" id="cd03894">
    <property type="entry name" value="M20_ArgE"/>
    <property type="match status" value="1"/>
</dbReference>
<dbReference type="FunFam" id="3.30.70.360:FF:000003">
    <property type="entry name" value="Acetylornithine deacetylase"/>
    <property type="match status" value="1"/>
</dbReference>
<dbReference type="Gene3D" id="3.30.70.360">
    <property type="match status" value="1"/>
</dbReference>
<dbReference type="Gene3D" id="3.40.630.10">
    <property type="entry name" value="Zn peptidases"/>
    <property type="match status" value="1"/>
</dbReference>
<dbReference type="HAMAP" id="MF_01108">
    <property type="entry name" value="ArgE"/>
    <property type="match status" value="1"/>
</dbReference>
<dbReference type="InterPro" id="IPR010169">
    <property type="entry name" value="AcOrn-deacetyl"/>
</dbReference>
<dbReference type="InterPro" id="IPR001261">
    <property type="entry name" value="ArgE/DapE_CS"/>
</dbReference>
<dbReference type="InterPro" id="IPR036264">
    <property type="entry name" value="Bact_exopeptidase_dim_dom"/>
</dbReference>
<dbReference type="InterPro" id="IPR002933">
    <property type="entry name" value="Peptidase_M20"/>
</dbReference>
<dbReference type="InterPro" id="IPR011650">
    <property type="entry name" value="Peptidase_M20_dimer"/>
</dbReference>
<dbReference type="InterPro" id="IPR050072">
    <property type="entry name" value="Peptidase_M20A"/>
</dbReference>
<dbReference type="NCBIfam" id="TIGR01892">
    <property type="entry name" value="AcOrn-deacetyl"/>
    <property type="match status" value="1"/>
</dbReference>
<dbReference type="NCBIfam" id="NF003474">
    <property type="entry name" value="PRK05111.1"/>
    <property type="match status" value="1"/>
</dbReference>
<dbReference type="PANTHER" id="PTHR43808">
    <property type="entry name" value="ACETYLORNITHINE DEACETYLASE"/>
    <property type="match status" value="1"/>
</dbReference>
<dbReference type="PANTHER" id="PTHR43808:SF1">
    <property type="entry name" value="ACETYLORNITHINE DEACETYLASE"/>
    <property type="match status" value="1"/>
</dbReference>
<dbReference type="Pfam" id="PF07687">
    <property type="entry name" value="M20_dimer"/>
    <property type="match status" value="1"/>
</dbReference>
<dbReference type="Pfam" id="PF01546">
    <property type="entry name" value="Peptidase_M20"/>
    <property type="match status" value="1"/>
</dbReference>
<dbReference type="SUPFAM" id="SSF55031">
    <property type="entry name" value="Bacterial exopeptidase dimerisation domain"/>
    <property type="match status" value="1"/>
</dbReference>
<dbReference type="SUPFAM" id="SSF53187">
    <property type="entry name" value="Zn-dependent exopeptidases"/>
    <property type="match status" value="1"/>
</dbReference>
<dbReference type="PROSITE" id="PS00758">
    <property type="entry name" value="ARGE_DAPE_CPG2_1"/>
    <property type="match status" value="1"/>
</dbReference>
<dbReference type="PROSITE" id="PS00759">
    <property type="entry name" value="ARGE_DAPE_CPG2_2"/>
    <property type="match status" value="1"/>
</dbReference>
<reference key="1">
    <citation type="journal article" date="2000" name="J. Bacteriol.">
        <title>Evolution of arginine biosynthesis in the bacterial domain: novel gene-enzyme relationships from psychrophilic Moritella strains (Vibrionaceae) and evolutionary significance of N-alpha-acetyl ornithinase.</title>
        <authorList>
            <person name="Xu Y."/>
            <person name="Liang Z."/>
            <person name="Legrain C."/>
            <person name="Ruger H.J."/>
            <person name="Glansdorff N."/>
        </authorList>
    </citation>
    <scope>NUCLEOTIDE SEQUENCE [GENOMIC DNA]</scope>
    <scope>CHARACTERIZATION</scope>
    <source>
        <strain>2674</strain>
    </source>
</reference>
<organism>
    <name type="scientific">Moritella profunda</name>
    <dbReference type="NCBI Taxonomy" id="111291"/>
    <lineage>
        <taxon>Bacteria</taxon>
        <taxon>Pseudomonadati</taxon>
        <taxon>Pseudomonadota</taxon>
        <taxon>Gammaproteobacteria</taxon>
        <taxon>Alteromonadales</taxon>
        <taxon>Moritellaceae</taxon>
        <taxon>Moritella</taxon>
    </lineage>
</organism>
<gene>
    <name evidence="1" type="primary">argE</name>
</gene>
<proteinExistence type="evidence at protein level"/>
<feature type="chain" id="PRO_0000185244" description="Acetylornithine deacetylase">
    <location>
        <begin position="1"/>
        <end position="381"/>
    </location>
</feature>
<feature type="active site" evidence="1">
    <location>
        <position position="80"/>
    </location>
</feature>
<feature type="active site" evidence="1">
    <location>
        <position position="142"/>
    </location>
</feature>
<feature type="binding site" evidence="1">
    <location>
        <position position="78"/>
    </location>
    <ligand>
        <name>Zn(2+)</name>
        <dbReference type="ChEBI" id="CHEBI:29105"/>
        <label>1</label>
    </ligand>
</feature>
<feature type="binding site" evidence="1">
    <location>
        <position position="110"/>
    </location>
    <ligand>
        <name>Zn(2+)</name>
        <dbReference type="ChEBI" id="CHEBI:29105"/>
        <label>1</label>
    </ligand>
</feature>
<feature type="binding site" evidence="1">
    <location>
        <position position="110"/>
    </location>
    <ligand>
        <name>Zn(2+)</name>
        <dbReference type="ChEBI" id="CHEBI:29105"/>
        <label>2</label>
    </ligand>
</feature>
<feature type="binding site" evidence="1">
    <location>
        <position position="143"/>
    </location>
    <ligand>
        <name>Zn(2+)</name>
        <dbReference type="ChEBI" id="CHEBI:29105"/>
        <label>2</label>
    </ligand>
</feature>
<feature type="binding site" evidence="1">
    <location>
        <position position="167"/>
    </location>
    <ligand>
        <name>Zn(2+)</name>
        <dbReference type="ChEBI" id="CHEBI:29105"/>
        <label>1</label>
    </ligand>
</feature>
<feature type="binding site" evidence="1">
    <location>
        <position position="353"/>
    </location>
    <ligand>
        <name>Zn(2+)</name>
        <dbReference type="ChEBI" id="CHEBI:29105"/>
        <label>2</label>
    </ligand>
</feature>